<reference key="1">
    <citation type="submission" date="2008-10" db="EMBL/GenBank/DDBJ databases">
        <title>Complete sequence of Desulfovibrio vulgaris str. 'Miyazaki F'.</title>
        <authorList>
            <person name="Lucas S."/>
            <person name="Copeland A."/>
            <person name="Lapidus A."/>
            <person name="Glavina del Rio T."/>
            <person name="Dalin E."/>
            <person name="Tice H."/>
            <person name="Bruce D."/>
            <person name="Goodwin L."/>
            <person name="Pitluck S."/>
            <person name="Sims D."/>
            <person name="Brettin T."/>
            <person name="Detter J.C."/>
            <person name="Han C."/>
            <person name="Larimer F."/>
            <person name="Land M."/>
            <person name="Hauser L."/>
            <person name="Kyrpides N."/>
            <person name="Mikhailova N."/>
            <person name="Hazen T.C."/>
            <person name="Richardson P."/>
        </authorList>
    </citation>
    <scope>NUCLEOTIDE SEQUENCE [LARGE SCALE GENOMIC DNA]</scope>
    <source>
        <strain>DSM 19637 / Miyazaki F</strain>
    </source>
</reference>
<dbReference type="EC" id="2.4.2.18" evidence="1"/>
<dbReference type="EMBL" id="CP001197">
    <property type="protein sequence ID" value="ACL08689.1"/>
    <property type="molecule type" value="Genomic_DNA"/>
</dbReference>
<dbReference type="SMR" id="B8DM45"/>
<dbReference type="STRING" id="883.DvMF_1744"/>
<dbReference type="KEGG" id="dvm:DvMF_1744"/>
<dbReference type="eggNOG" id="COG0547">
    <property type="taxonomic scope" value="Bacteria"/>
</dbReference>
<dbReference type="HOGENOM" id="CLU_034315_2_1_7"/>
<dbReference type="OrthoDB" id="9806430at2"/>
<dbReference type="UniPathway" id="UPA00035">
    <property type="reaction ID" value="UER00041"/>
</dbReference>
<dbReference type="GO" id="GO:0005829">
    <property type="term" value="C:cytosol"/>
    <property type="evidence" value="ECO:0007669"/>
    <property type="project" value="TreeGrafter"/>
</dbReference>
<dbReference type="GO" id="GO:0004048">
    <property type="term" value="F:anthranilate phosphoribosyltransferase activity"/>
    <property type="evidence" value="ECO:0007669"/>
    <property type="project" value="UniProtKB-UniRule"/>
</dbReference>
<dbReference type="GO" id="GO:0000287">
    <property type="term" value="F:magnesium ion binding"/>
    <property type="evidence" value="ECO:0007669"/>
    <property type="project" value="UniProtKB-UniRule"/>
</dbReference>
<dbReference type="GO" id="GO:0000162">
    <property type="term" value="P:L-tryptophan biosynthetic process"/>
    <property type="evidence" value="ECO:0007669"/>
    <property type="project" value="UniProtKB-UniRule"/>
</dbReference>
<dbReference type="Gene3D" id="3.40.1030.10">
    <property type="entry name" value="Nucleoside phosphorylase/phosphoribosyltransferase catalytic domain"/>
    <property type="match status" value="1"/>
</dbReference>
<dbReference type="Gene3D" id="1.20.970.10">
    <property type="entry name" value="Transferase, Pyrimidine Nucleoside Phosphorylase, Chain C"/>
    <property type="match status" value="1"/>
</dbReference>
<dbReference type="HAMAP" id="MF_00211">
    <property type="entry name" value="TrpD"/>
    <property type="match status" value="1"/>
</dbReference>
<dbReference type="InterPro" id="IPR005940">
    <property type="entry name" value="Anthranilate_Pribosyl_Tfrase"/>
</dbReference>
<dbReference type="InterPro" id="IPR000312">
    <property type="entry name" value="Glycosyl_Trfase_fam3"/>
</dbReference>
<dbReference type="InterPro" id="IPR017459">
    <property type="entry name" value="Glycosyl_Trfase_fam3_N_dom"/>
</dbReference>
<dbReference type="InterPro" id="IPR036320">
    <property type="entry name" value="Glycosyl_Trfase_fam3_N_dom_sf"/>
</dbReference>
<dbReference type="InterPro" id="IPR035902">
    <property type="entry name" value="Nuc_phospho_transferase"/>
</dbReference>
<dbReference type="NCBIfam" id="TIGR01245">
    <property type="entry name" value="trpD"/>
    <property type="match status" value="1"/>
</dbReference>
<dbReference type="PANTHER" id="PTHR43285">
    <property type="entry name" value="ANTHRANILATE PHOSPHORIBOSYLTRANSFERASE"/>
    <property type="match status" value="1"/>
</dbReference>
<dbReference type="PANTHER" id="PTHR43285:SF2">
    <property type="entry name" value="ANTHRANILATE PHOSPHORIBOSYLTRANSFERASE"/>
    <property type="match status" value="1"/>
</dbReference>
<dbReference type="Pfam" id="PF02885">
    <property type="entry name" value="Glycos_trans_3N"/>
    <property type="match status" value="1"/>
</dbReference>
<dbReference type="Pfam" id="PF00591">
    <property type="entry name" value="Glycos_transf_3"/>
    <property type="match status" value="1"/>
</dbReference>
<dbReference type="SUPFAM" id="SSF52418">
    <property type="entry name" value="Nucleoside phosphorylase/phosphoribosyltransferase catalytic domain"/>
    <property type="match status" value="1"/>
</dbReference>
<dbReference type="SUPFAM" id="SSF47648">
    <property type="entry name" value="Nucleoside phosphorylase/phosphoribosyltransferase N-terminal domain"/>
    <property type="match status" value="1"/>
</dbReference>
<keyword id="KW-0028">Amino-acid biosynthesis</keyword>
<keyword id="KW-0057">Aromatic amino acid biosynthesis</keyword>
<keyword id="KW-0328">Glycosyltransferase</keyword>
<keyword id="KW-0460">Magnesium</keyword>
<keyword id="KW-0479">Metal-binding</keyword>
<keyword id="KW-0808">Transferase</keyword>
<keyword id="KW-0822">Tryptophan biosynthesis</keyword>
<protein>
    <recommendedName>
        <fullName evidence="1">Anthranilate phosphoribosyltransferase</fullName>
        <ecNumber evidence="1">2.4.2.18</ecNumber>
    </recommendedName>
</protein>
<evidence type="ECO:0000255" key="1">
    <source>
        <dbReference type="HAMAP-Rule" id="MF_00211"/>
    </source>
</evidence>
<feature type="chain" id="PRO_1000198821" description="Anthranilate phosphoribosyltransferase">
    <location>
        <begin position="1"/>
        <end position="338"/>
    </location>
</feature>
<feature type="binding site" evidence="1">
    <location>
        <position position="83"/>
    </location>
    <ligand>
        <name>5-phospho-alpha-D-ribose 1-diphosphate</name>
        <dbReference type="ChEBI" id="CHEBI:58017"/>
    </ligand>
</feature>
<feature type="binding site" evidence="1">
    <location>
        <position position="83"/>
    </location>
    <ligand>
        <name>anthranilate</name>
        <dbReference type="ChEBI" id="CHEBI:16567"/>
        <label>1</label>
    </ligand>
</feature>
<feature type="binding site" evidence="1">
    <location>
        <begin position="86"/>
        <end position="87"/>
    </location>
    <ligand>
        <name>5-phospho-alpha-D-ribose 1-diphosphate</name>
        <dbReference type="ChEBI" id="CHEBI:58017"/>
    </ligand>
</feature>
<feature type="binding site" evidence="1">
    <location>
        <position position="91"/>
    </location>
    <ligand>
        <name>5-phospho-alpha-D-ribose 1-diphosphate</name>
        <dbReference type="ChEBI" id="CHEBI:58017"/>
    </ligand>
</feature>
<feature type="binding site" evidence="1">
    <location>
        <begin position="93"/>
        <end position="96"/>
    </location>
    <ligand>
        <name>5-phospho-alpha-D-ribose 1-diphosphate</name>
        <dbReference type="ChEBI" id="CHEBI:58017"/>
    </ligand>
</feature>
<feature type="binding site" evidence="1">
    <location>
        <position position="95"/>
    </location>
    <ligand>
        <name>Mg(2+)</name>
        <dbReference type="ChEBI" id="CHEBI:18420"/>
        <label>1</label>
    </ligand>
</feature>
<feature type="binding site" evidence="1">
    <location>
        <begin position="111"/>
        <end position="119"/>
    </location>
    <ligand>
        <name>5-phospho-alpha-D-ribose 1-diphosphate</name>
        <dbReference type="ChEBI" id="CHEBI:58017"/>
    </ligand>
</feature>
<feature type="binding site" evidence="1">
    <location>
        <position position="114"/>
    </location>
    <ligand>
        <name>anthranilate</name>
        <dbReference type="ChEBI" id="CHEBI:16567"/>
        <label>1</label>
    </ligand>
</feature>
<feature type="binding site" evidence="1">
    <location>
        <position position="123"/>
    </location>
    <ligand>
        <name>5-phospho-alpha-D-ribose 1-diphosphate</name>
        <dbReference type="ChEBI" id="CHEBI:58017"/>
    </ligand>
</feature>
<feature type="binding site" evidence="1">
    <location>
        <position position="169"/>
    </location>
    <ligand>
        <name>anthranilate</name>
        <dbReference type="ChEBI" id="CHEBI:16567"/>
        <label>2</label>
    </ligand>
</feature>
<feature type="binding site" evidence="1">
    <location>
        <position position="228"/>
    </location>
    <ligand>
        <name>Mg(2+)</name>
        <dbReference type="ChEBI" id="CHEBI:18420"/>
        <label>2</label>
    </ligand>
</feature>
<feature type="binding site" evidence="1">
    <location>
        <position position="229"/>
    </location>
    <ligand>
        <name>Mg(2+)</name>
        <dbReference type="ChEBI" id="CHEBI:18420"/>
        <label>1</label>
    </ligand>
</feature>
<feature type="binding site" evidence="1">
    <location>
        <position position="229"/>
    </location>
    <ligand>
        <name>Mg(2+)</name>
        <dbReference type="ChEBI" id="CHEBI:18420"/>
        <label>2</label>
    </ligand>
</feature>
<sequence>MQTATSIILETLATGMDLAPELAEAGFSRLMDGEMTCAQAGSFLMGLRMKGETPQELTEAVRAALARAVRVTGIDGPTIDIVGTGGDGRSSFNCSTATALTLAGMGHRVVKHGNRAVSSSCGAADAVEGLGLPLELDPEDVRALVAQRNFAFLFAPRFHPAFRNVMPIRRELGVRTLFNLLGPLLNPARPSHMLLGVARAELLPLMARTLLLTGVRRAAVVHGAGGYDELTPMGPAHIMLLEGDGQGHGTLTEISVDPADYGIASCTPEELAVPDRDTAVRVLRELLSGGGPAPMRDMLMLNVGMALHLLEPGLALPDAMAAARLALAAGAGGKVLHA</sequence>
<proteinExistence type="inferred from homology"/>
<name>TRPD_NITV9</name>
<accession>B8DM45</accession>
<gene>
    <name evidence="1" type="primary">trpD</name>
    <name type="ordered locus">DvMF_1744</name>
</gene>
<organism>
    <name type="scientific">Nitratidesulfovibrio vulgaris (strain DSM 19637 / Miyazaki F)</name>
    <name type="common">Desulfovibrio vulgaris</name>
    <dbReference type="NCBI Taxonomy" id="883"/>
    <lineage>
        <taxon>Bacteria</taxon>
        <taxon>Pseudomonadati</taxon>
        <taxon>Thermodesulfobacteriota</taxon>
        <taxon>Desulfovibrionia</taxon>
        <taxon>Desulfovibrionales</taxon>
        <taxon>Desulfovibrionaceae</taxon>
        <taxon>Nitratidesulfovibrio</taxon>
    </lineage>
</organism>
<comment type="function">
    <text evidence="1">Catalyzes the transfer of the phosphoribosyl group of 5-phosphorylribose-1-pyrophosphate (PRPP) to anthranilate to yield N-(5'-phosphoribosyl)-anthranilate (PRA).</text>
</comment>
<comment type="catalytic activity">
    <reaction evidence="1">
        <text>N-(5-phospho-beta-D-ribosyl)anthranilate + diphosphate = 5-phospho-alpha-D-ribose 1-diphosphate + anthranilate</text>
        <dbReference type="Rhea" id="RHEA:11768"/>
        <dbReference type="ChEBI" id="CHEBI:16567"/>
        <dbReference type="ChEBI" id="CHEBI:18277"/>
        <dbReference type="ChEBI" id="CHEBI:33019"/>
        <dbReference type="ChEBI" id="CHEBI:58017"/>
        <dbReference type="EC" id="2.4.2.18"/>
    </reaction>
</comment>
<comment type="cofactor">
    <cofactor evidence="1">
        <name>Mg(2+)</name>
        <dbReference type="ChEBI" id="CHEBI:18420"/>
    </cofactor>
    <text evidence="1">Binds 2 magnesium ions per monomer.</text>
</comment>
<comment type="pathway">
    <text evidence="1">Amino-acid biosynthesis; L-tryptophan biosynthesis; L-tryptophan from chorismate: step 2/5.</text>
</comment>
<comment type="subunit">
    <text evidence="1">Homodimer.</text>
</comment>
<comment type="similarity">
    <text evidence="1">Belongs to the anthranilate phosphoribosyltransferase family.</text>
</comment>